<name>LRGA_BACC7</name>
<keyword id="KW-1003">Cell membrane</keyword>
<keyword id="KW-0204">Cytolysis</keyword>
<keyword id="KW-0472">Membrane</keyword>
<keyword id="KW-0812">Transmembrane</keyword>
<keyword id="KW-1133">Transmembrane helix</keyword>
<reference key="1">
    <citation type="submission" date="2008-10" db="EMBL/GenBank/DDBJ databases">
        <title>Genome sequence of Bacillus cereus AH187.</title>
        <authorList>
            <person name="Dodson R.J."/>
            <person name="Durkin A.S."/>
            <person name="Rosovitz M.J."/>
            <person name="Rasko D.A."/>
            <person name="Kolsto A.B."/>
            <person name="Okstad O.A."/>
            <person name="Ravel J."/>
            <person name="Sutton G."/>
        </authorList>
    </citation>
    <scope>NUCLEOTIDE SEQUENCE [LARGE SCALE GENOMIC DNA]</scope>
    <source>
        <strain>AH187</strain>
    </source>
</reference>
<organism>
    <name type="scientific">Bacillus cereus (strain AH187)</name>
    <dbReference type="NCBI Taxonomy" id="405534"/>
    <lineage>
        <taxon>Bacteria</taxon>
        <taxon>Bacillati</taxon>
        <taxon>Bacillota</taxon>
        <taxon>Bacilli</taxon>
        <taxon>Bacillales</taxon>
        <taxon>Bacillaceae</taxon>
        <taxon>Bacillus</taxon>
        <taxon>Bacillus cereus group</taxon>
    </lineage>
</organism>
<comment type="function">
    <text evidence="1">Inhibits the expression or activity of extracellular murein hydrolases by interacting, possibly with LrgB, with the holin-like protein CidA. The LrgAB and CidA proteins may affect the proton motive force of the membrane. May be involved in programmed cell death (PCD), possibly triggering PCD in response to antibiotics and environmental stresses.</text>
</comment>
<comment type="subcellular location">
    <subcellularLocation>
        <location evidence="1">Cell membrane</location>
        <topology evidence="1">Multi-pass membrane protein</topology>
    </subcellularLocation>
</comment>
<comment type="similarity">
    <text evidence="1">Belongs to the CidA/LrgA family. LrgA subfamily.</text>
</comment>
<sequence length="143" mass="15423">MSTKKVYSFLSQAFIFSAIMLISNIIATHLPIPMPSSVIGLVILFSLLCLKVIKLEQVESLGTALTGIIGFLFVPSGISVINSLGVMGQYFVQILTVIVVATVILLAVTGLFAQFILGKDKKETEDTKELKVVNKGRKHGKVA</sequence>
<evidence type="ECO:0000255" key="1">
    <source>
        <dbReference type="HAMAP-Rule" id="MF_01141"/>
    </source>
</evidence>
<accession>B7HZC4</accession>
<proteinExistence type="inferred from homology"/>
<protein>
    <recommendedName>
        <fullName evidence="1">Antiholin-like protein LrgA</fullName>
    </recommendedName>
</protein>
<gene>
    <name evidence="1" type="primary">lrgA</name>
    <name type="ordered locus">BCAH187_A5620</name>
</gene>
<feature type="chain" id="PRO_1000137346" description="Antiholin-like protein LrgA">
    <location>
        <begin position="1"/>
        <end position="143"/>
    </location>
</feature>
<feature type="transmembrane region" description="Helical" evidence="1">
    <location>
        <begin position="6"/>
        <end position="26"/>
    </location>
</feature>
<feature type="transmembrane region" description="Helical" evidence="1">
    <location>
        <begin position="30"/>
        <end position="50"/>
    </location>
</feature>
<feature type="transmembrane region" description="Helical" evidence="1">
    <location>
        <begin position="61"/>
        <end position="81"/>
    </location>
</feature>
<feature type="transmembrane region" description="Helical" evidence="1">
    <location>
        <begin position="97"/>
        <end position="117"/>
    </location>
</feature>
<dbReference type="EMBL" id="CP001177">
    <property type="protein sequence ID" value="ACJ77359.1"/>
    <property type="molecule type" value="Genomic_DNA"/>
</dbReference>
<dbReference type="SMR" id="B7HZC4"/>
<dbReference type="KEGG" id="bcr:BCAH187_A5620"/>
<dbReference type="HOGENOM" id="CLU_113736_0_1_9"/>
<dbReference type="Proteomes" id="UP000002214">
    <property type="component" value="Chromosome"/>
</dbReference>
<dbReference type="GO" id="GO:0005886">
    <property type="term" value="C:plasma membrane"/>
    <property type="evidence" value="ECO:0007669"/>
    <property type="project" value="UniProtKB-SubCell"/>
</dbReference>
<dbReference type="GO" id="GO:0019835">
    <property type="term" value="P:cytolysis"/>
    <property type="evidence" value="ECO:0007669"/>
    <property type="project" value="UniProtKB-UniRule"/>
</dbReference>
<dbReference type="GO" id="GO:0031640">
    <property type="term" value="P:killing of cells of another organism"/>
    <property type="evidence" value="ECO:0007669"/>
    <property type="project" value="UniProtKB-KW"/>
</dbReference>
<dbReference type="GO" id="GO:0012501">
    <property type="term" value="P:programmed cell death"/>
    <property type="evidence" value="ECO:0007669"/>
    <property type="project" value="UniProtKB-UniRule"/>
</dbReference>
<dbReference type="HAMAP" id="MF_01141">
    <property type="entry name" value="LrgA"/>
    <property type="match status" value="1"/>
</dbReference>
<dbReference type="InterPro" id="IPR023736">
    <property type="entry name" value="Antiholin-like_LrgA"/>
</dbReference>
<dbReference type="InterPro" id="IPR005538">
    <property type="entry name" value="LrgA/CidA"/>
</dbReference>
<dbReference type="NCBIfam" id="NF003155">
    <property type="entry name" value="PRK04125.1"/>
    <property type="match status" value="1"/>
</dbReference>
<dbReference type="PANTHER" id="PTHR33931:SF4">
    <property type="entry name" value="ANTIHOLIN-LIKE PROTEIN LRGA"/>
    <property type="match status" value="1"/>
</dbReference>
<dbReference type="PANTHER" id="PTHR33931">
    <property type="entry name" value="HOLIN-LIKE PROTEIN CIDA-RELATED"/>
    <property type="match status" value="1"/>
</dbReference>
<dbReference type="Pfam" id="PF03788">
    <property type="entry name" value="LrgA"/>
    <property type="match status" value="1"/>
</dbReference>